<accession>A8GBC5</accession>
<sequence length="345" mass="38333">MADRIHWTVGLAQTLFDKPLLELLFEAQTVHRQHFDPRQVQVSTLLSIKTGACPEDCKYCPQSSRYKTGLESERLMQVEQVLESARKAKANGSTRFCMGAAWKNPHERDMPYLQQMVQGVKAMGMETCMTLGTLDGTQAERLADAGLDYYNHNLDTSPEFYGNIITTRSYQERLDTLGKVRGAGIKVCSGGIVGLGETVRDRAGLLVQLANLPTPPESVPINMLVKVKGTPLADNEDVDPFDFIRTIAVARIMMPASYVRLSAGREQMNEQTQAMCFMAGANSIFYGCKLLTTPNPEEDKDLQLFRKLGLNPQQTETEHGDNQQQQALAAQLMQADTAEFYNAAL</sequence>
<comment type="function">
    <text evidence="1">Catalyzes the conversion of dethiobiotin (DTB) to biotin by the insertion of a sulfur atom into dethiobiotin via a radical-based mechanism.</text>
</comment>
<comment type="catalytic activity">
    <reaction evidence="1">
        <text>(4R,5S)-dethiobiotin + (sulfur carrier)-SH + 2 reduced [2Fe-2S]-[ferredoxin] + 2 S-adenosyl-L-methionine = (sulfur carrier)-H + biotin + 2 5'-deoxyadenosine + 2 L-methionine + 2 oxidized [2Fe-2S]-[ferredoxin]</text>
        <dbReference type="Rhea" id="RHEA:22060"/>
        <dbReference type="Rhea" id="RHEA-COMP:10000"/>
        <dbReference type="Rhea" id="RHEA-COMP:10001"/>
        <dbReference type="Rhea" id="RHEA-COMP:14737"/>
        <dbReference type="Rhea" id="RHEA-COMP:14739"/>
        <dbReference type="ChEBI" id="CHEBI:17319"/>
        <dbReference type="ChEBI" id="CHEBI:29917"/>
        <dbReference type="ChEBI" id="CHEBI:33737"/>
        <dbReference type="ChEBI" id="CHEBI:33738"/>
        <dbReference type="ChEBI" id="CHEBI:57586"/>
        <dbReference type="ChEBI" id="CHEBI:57844"/>
        <dbReference type="ChEBI" id="CHEBI:59789"/>
        <dbReference type="ChEBI" id="CHEBI:64428"/>
        <dbReference type="ChEBI" id="CHEBI:149473"/>
        <dbReference type="EC" id="2.8.1.6"/>
    </reaction>
</comment>
<comment type="cofactor">
    <cofactor evidence="1">
        <name>[4Fe-4S] cluster</name>
        <dbReference type="ChEBI" id="CHEBI:49883"/>
    </cofactor>
    <text evidence="1">Binds 1 [4Fe-4S] cluster. The cluster is coordinated with 3 cysteines and an exchangeable S-adenosyl-L-methionine.</text>
</comment>
<comment type="cofactor">
    <cofactor evidence="1">
        <name>[2Fe-2S] cluster</name>
        <dbReference type="ChEBI" id="CHEBI:190135"/>
    </cofactor>
    <text evidence="1">Binds 1 [2Fe-2S] cluster. The cluster is coordinated with 3 cysteines and 1 arginine.</text>
</comment>
<comment type="pathway">
    <text evidence="1">Cofactor biosynthesis; biotin biosynthesis; biotin from 7,8-diaminononanoate: step 2/2.</text>
</comment>
<comment type="subunit">
    <text evidence="1">Homodimer.</text>
</comment>
<comment type="similarity">
    <text evidence="1">Belongs to the radical SAM superfamily. Biotin synthase family.</text>
</comment>
<reference key="1">
    <citation type="submission" date="2007-09" db="EMBL/GenBank/DDBJ databases">
        <title>Complete sequence of chromosome of Serratia proteamaculans 568.</title>
        <authorList>
            <consortium name="US DOE Joint Genome Institute"/>
            <person name="Copeland A."/>
            <person name="Lucas S."/>
            <person name="Lapidus A."/>
            <person name="Barry K."/>
            <person name="Glavina del Rio T."/>
            <person name="Dalin E."/>
            <person name="Tice H."/>
            <person name="Pitluck S."/>
            <person name="Chain P."/>
            <person name="Malfatti S."/>
            <person name="Shin M."/>
            <person name="Vergez L."/>
            <person name="Schmutz J."/>
            <person name="Larimer F."/>
            <person name="Land M."/>
            <person name="Hauser L."/>
            <person name="Kyrpides N."/>
            <person name="Kim E."/>
            <person name="Taghavi S."/>
            <person name="Newman L."/>
            <person name="Vangronsveld J."/>
            <person name="van der Lelie D."/>
            <person name="Richardson P."/>
        </authorList>
    </citation>
    <scope>NUCLEOTIDE SEQUENCE [LARGE SCALE GENOMIC DNA]</scope>
    <source>
        <strain>568</strain>
    </source>
</reference>
<evidence type="ECO:0000255" key="1">
    <source>
        <dbReference type="HAMAP-Rule" id="MF_01694"/>
    </source>
</evidence>
<evidence type="ECO:0000255" key="2">
    <source>
        <dbReference type="PROSITE-ProRule" id="PRU01266"/>
    </source>
</evidence>
<organism>
    <name type="scientific">Serratia proteamaculans (strain 568)</name>
    <dbReference type="NCBI Taxonomy" id="399741"/>
    <lineage>
        <taxon>Bacteria</taxon>
        <taxon>Pseudomonadati</taxon>
        <taxon>Pseudomonadota</taxon>
        <taxon>Gammaproteobacteria</taxon>
        <taxon>Enterobacterales</taxon>
        <taxon>Yersiniaceae</taxon>
        <taxon>Serratia</taxon>
    </lineage>
</organism>
<keyword id="KW-0001">2Fe-2S</keyword>
<keyword id="KW-0004">4Fe-4S</keyword>
<keyword id="KW-0093">Biotin biosynthesis</keyword>
<keyword id="KW-0408">Iron</keyword>
<keyword id="KW-0411">Iron-sulfur</keyword>
<keyword id="KW-0479">Metal-binding</keyword>
<keyword id="KW-0949">S-adenosyl-L-methionine</keyword>
<keyword id="KW-0808">Transferase</keyword>
<protein>
    <recommendedName>
        <fullName evidence="1">Biotin synthase</fullName>
        <ecNumber evidence="1">2.8.1.6</ecNumber>
    </recommendedName>
</protein>
<dbReference type="EC" id="2.8.1.6" evidence="1"/>
<dbReference type="EMBL" id="CP000826">
    <property type="protein sequence ID" value="ABV40415.1"/>
    <property type="molecule type" value="Genomic_DNA"/>
</dbReference>
<dbReference type="SMR" id="A8GBC5"/>
<dbReference type="STRING" id="399741.Spro_1311"/>
<dbReference type="KEGG" id="spe:Spro_1311"/>
<dbReference type="eggNOG" id="COG0502">
    <property type="taxonomic scope" value="Bacteria"/>
</dbReference>
<dbReference type="HOGENOM" id="CLU_033172_1_2_6"/>
<dbReference type="OrthoDB" id="9786826at2"/>
<dbReference type="UniPathway" id="UPA00078">
    <property type="reaction ID" value="UER00162"/>
</dbReference>
<dbReference type="GO" id="GO:0051537">
    <property type="term" value="F:2 iron, 2 sulfur cluster binding"/>
    <property type="evidence" value="ECO:0007669"/>
    <property type="project" value="UniProtKB-KW"/>
</dbReference>
<dbReference type="GO" id="GO:0051539">
    <property type="term" value="F:4 iron, 4 sulfur cluster binding"/>
    <property type="evidence" value="ECO:0007669"/>
    <property type="project" value="UniProtKB-KW"/>
</dbReference>
<dbReference type="GO" id="GO:0004076">
    <property type="term" value="F:biotin synthase activity"/>
    <property type="evidence" value="ECO:0007669"/>
    <property type="project" value="UniProtKB-UniRule"/>
</dbReference>
<dbReference type="GO" id="GO:0005506">
    <property type="term" value="F:iron ion binding"/>
    <property type="evidence" value="ECO:0007669"/>
    <property type="project" value="UniProtKB-UniRule"/>
</dbReference>
<dbReference type="GO" id="GO:0009102">
    <property type="term" value="P:biotin biosynthetic process"/>
    <property type="evidence" value="ECO:0007669"/>
    <property type="project" value="UniProtKB-UniRule"/>
</dbReference>
<dbReference type="CDD" id="cd01335">
    <property type="entry name" value="Radical_SAM"/>
    <property type="match status" value="1"/>
</dbReference>
<dbReference type="FunFam" id="3.20.20.70:FF:000011">
    <property type="entry name" value="Biotin synthase"/>
    <property type="match status" value="1"/>
</dbReference>
<dbReference type="Gene3D" id="3.20.20.70">
    <property type="entry name" value="Aldolase class I"/>
    <property type="match status" value="1"/>
</dbReference>
<dbReference type="HAMAP" id="MF_01694">
    <property type="entry name" value="BioB"/>
    <property type="match status" value="1"/>
</dbReference>
<dbReference type="InterPro" id="IPR013785">
    <property type="entry name" value="Aldolase_TIM"/>
</dbReference>
<dbReference type="InterPro" id="IPR010722">
    <property type="entry name" value="BATS_dom"/>
</dbReference>
<dbReference type="InterPro" id="IPR002684">
    <property type="entry name" value="Biotin_synth/BioAB"/>
</dbReference>
<dbReference type="InterPro" id="IPR024177">
    <property type="entry name" value="Biotin_synthase"/>
</dbReference>
<dbReference type="InterPro" id="IPR006638">
    <property type="entry name" value="Elp3/MiaA/NifB-like_rSAM"/>
</dbReference>
<dbReference type="InterPro" id="IPR007197">
    <property type="entry name" value="rSAM"/>
</dbReference>
<dbReference type="NCBIfam" id="TIGR00433">
    <property type="entry name" value="bioB"/>
    <property type="match status" value="1"/>
</dbReference>
<dbReference type="PANTHER" id="PTHR22976">
    <property type="entry name" value="BIOTIN SYNTHASE"/>
    <property type="match status" value="1"/>
</dbReference>
<dbReference type="PANTHER" id="PTHR22976:SF2">
    <property type="entry name" value="BIOTIN SYNTHASE, MITOCHONDRIAL"/>
    <property type="match status" value="1"/>
</dbReference>
<dbReference type="Pfam" id="PF06968">
    <property type="entry name" value="BATS"/>
    <property type="match status" value="1"/>
</dbReference>
<dbReference type="Pfam" id="PF04055">
    <property type="entry name" value="Radical_SAM"/>
    <property type="match status" value="1"/>
</dbReference>
<dbReference type="PIRSF" id="PIRSF001619">
    <property type="entry name" value="Biotin_synth"/>
    <property type="match status" value="1"/>
</dbReference>
<dbReference type="SFLD" id="SFLDG01060">
    <property type="entry name" value="BATS_domain_containing"/>
    <property type="match status" value="1"/>
</dbReference>
<dbReference type="SFLD" id="SFLDF00272">
    <property type="entry name" value="biotin_synthase"/>
    <property type="match status" value="1"/>
</dbReference>
<dbReference type="SMART" id="SM00876">
    <property type="entry name" value="BATS"/>
    <property type="match status" value="1"/>
</dbReference>
<dbReference type="SMART" id="SM00729">
    <property type="entry name" value="Elp3"/>
    <property type="match status" value="1"/>
</dbReference>
<dbReference type="SUPFAM" id="SSF102114">
    <property type="entry name" value="Radical SAM enzymes"/>
    <property type="match status" value="1"/>
</dbReference>
<dbReference type="PROSITE" id="PS51918">
    <property type="entry name" value="RADICAL_SAM"/>
    <property type="match status" value="1"/>
</dbReference>
<gene>
    <name evidence="1" type="primary">bioB</name>
    <name type="ordered locus">Spro_1311</name>
</gene>
<name>BIOB_SERP5</name>
<proteinExistence type="inferred from homology"/>
<feature type="chain" id="PRO_0000381611" description="Biotin synthase">
    <location>
        <begin position="1"/>
        <end position="345"/>
    </location>
</feature>
<feature type="domain" description="Radical SAM core" evidence="2">
    <location>
        <begin position="38"/>
        <end position="256"/>
    </location>
</feature>
<feature type="binding site" evidence="1">
    <location>
        <position position="53"/>
    </location>
    <ligand>
        <name>[4Fe-4S] cluster</name>
        <dbReference type="ChEBI" id="CHEBI:49883"/>
        <note>4Fe-4S-S-AdoMet</note>
    </ligand>
</feature>
<feature type="binding site" evidence="1">
    <location>
        <position position="57"/>
    </location>
    <ligand>
        <name>[4Fe-4S] cluster</name>
        <dbReference type="ChEBI" id="CHEBI:49883"/>
        <note>4Fe-4S-S-AdoMet</note>
    </ligand>
</feature>
<feature type="binding site" evidence="1">
    <location>
        <position position="60"/>
    </location>
    <ligand>
        <name>[4Fe-4S] cluster</name>
        <dbReference type="ChEBI" id="CHEBI:49883"/>
        <note>4Fe-4S-S-AdoMet</note>
    </ligand>
</feature>
<feature type="binding site" evidence="1">
    <location>
        <position position="97"/>
    </location>
    <ligand>
        <name>[2Fe-2S] cluster</name>
        <dbReference type="ChEBI" id="CHEBI:190135"/>
    </ligand>
</feature>
<feature type="binding site" evidence="1">
    <location>
        <position position="128"/>
    </location>
    <ligand>
        <name>[2Fe-2S] cluster</name>
        <dbReference type="ChEBI" id="CHEBI:190135"/>
    </ligand>
</feature>
<feature type="binding site" evidence="1">
    <location>
        <position position="188"/>
    </location>
    <ligand>
        <name>[2Fe-2S] cluster</name>
        <dbReference type="ChEBI" id="CHEBI:190135"/>
    </ligand>
</feature>
<feature type="binding site" evidence="1">
    <location>
        <position position="260"/>
    </location>
    <ligand>
        <name>[2Fe-2S] cluster</name>
        <dbReference type="ChEBI" id="CHEBI:190135"/>
    </ligand>
</feature>